<keyword id="KW-0067">ATP-binding</keyword>
<keyword id="KW-0963">Cytoplasm</keyword>
<keyword id="KW-1015">Disulfide bond</keyword>
<keyword id="KW-0547">Nucleotide-binding</keyword>
<keyword id="KW-0676">Redox-active center</keyword>
<keyword id="KW-0694">RNA-binding</keyword>
<keyword id="KW-0784">Thiamine biosynthesis</keyword>
<keyword id="KW-0808">Transferase</keyword>
<keyword id="KW-0820">tRNA-binding</keyword>
<feature type="chain" id="PRO_1000074230" description="tRNA sulfurtransferase">
    <location>
        <begin position="1"/>
        <end position="484"/>
    </location>
</feature>
<feature type="domain" description="THUMP" evidence="1">
    <location>
        <begin position="61"/>
        <end position="165"/>
    </location>
</feature>
<feature type="domain" description="Rhodanese" evidence="1">
    <location>
        <begin position="404"/>
        <end position="484"/>
    </location>
</feature>
<feature type="active site" description="Cysteine persulfide intermediate" evidence="1">
    <location>
        <position position="456"/>
    </location>
</feature>
<feature type="binding site" evidence="1">
    <location>
        <begin position="183"/>
        <end position="184"/>
    </location>
    <ligand>
        <name>ATP</name>
        <dbReference type="ChEBI" id="CHEBI:30616"/>
    </ligand>
</feature>
<feature type="binding site" evidence="1">
    <location>
        <position position="265"/>
    </location>
    <ligand>
        <name>ATP</name>
        <dbReference type="ChEBI" id="CHEBI:30616"/>
    </ligand>
</feature>
<feature type="binding site" evidence="1">
    <location>
        <position position="287"/>
    </location>
    <ligand>
        <name>ATP</name>
        <dbReference type="ChEBI" id="CHEBI:30616"/>
    </ligand>
</feature>
<feature type="binding site" evidence="1">
    <location>
        <position position="296"/>
    </location>
    <ligand>
        <name>ATP</name>
        <dbReference type="ChEBI" id="CHEBI:30616"/>
    </ligand>
</feature>
<feature type="disulfide bond" description="Redox-active" evidence="1">
    <location>
        <begin position="344"/>
        <end position="456"/>
    </location>
</feature>
<comment type="function">
    <text evidence="1">Catalyzes the ATP-dependent transfer of a sulfur to tRNA to produce 4-thiouridine in position 8 of tRNAs, which functions as a near-UV photosensor. Also catalyzes the transfer of sulfur to the sulfur carrier protein ThiS, forming ThiS-thiocarboxylate. This is a step in the synthesis of thiazole, in the thiamine biosynthesis pathway. The sulfur is donated as persulfide by IscS.</text>
</comment>
<comment type="catalytic activity">
    <reaction evidence="1">
        <text>[ThiI sulfur-carrier protein]-S-sulfanyl-L-cysteine + a uridine in tRNA + 2 reduced [2Fe-2S]-[ferredoxin] + ATP + H(+) = [ThiI sulfur-carrier protein]-L-cysteine + a 4-thiouridine in tRNA + 2 oxidized [2Fe-2S]-[ferredoxin] + AMP + diphosphate</text>
        <dbReference type="Rhea" id="RHEA:24176"/>
        <dbReference type="Rhea" id="RHEA-COMP:10000"/>
        <dbReference type="Rhea" id="RHEA-COMP:10001"/>
        <dbReference type="Rhea" id="RHEA-COMP:13337"/>
        <dbReference type="Rhea" id="RHEA-COMP:13338"/>
        <dbReference type="Rhea" id="RHEA-COMP:13339"/>
        <dbReference type="Rhea" id="RHEA-COMP:13340"/>
        <dbReference type="ChEBI" id="CHEBI:15378"/>
        <dbReference type="ChEBI" id="CHEBI:29950"/>
        <dbReference type="ChEBI" id="CHEBI:30616"/>
        <dbReference type="ChEBI" id="CHEBI:33019"/>
        <dbReference type="ChEBI" id="CHEBI:33737"/>
        <dbReference type="ChEBI" id="CHEBI:33738"/>
        <dbReference type="ChEBI" id="CHEBI:61963"/>
        <dbReference type="ChEBI" id="CHEBI:65315"/>
        <dbReference type="ChEBI" id="CHEBI:136798"/>
        <dbReference type="ChEBI" id="CHEBI:456215"/>
        <dbReference type="EC" id="2.8.1.4"/>
    </reaction>
</comment>
<comment type="catalytic activity">
    <reaction evidence="1">
        <text>[ThiS sulfur-carrier protein]-C-terminal Gly-Gly-AMP + S-sulfanyl-L-cysteinyl-[cysteine desulfurase] + AH2 = [ThiS sulfur-carrier protein]-C-terminal-Gly-aminoethanethioate + L-cysteinyl-[cysteine desulfurase] + A + AMP + 2 H(+)</text>
        <dbReference type="Rhea" id="RHEA:43340"/>
        <dbReference type="Rhea" id="RHEA-COMP:12157"/>
        <dbReference type="Rhea" id="RHEA-COMP:12158"/>
        <dbReference type="Rhea" id="RHEA-COMP:12910"/>
        <dbReference type="Rhea" id="RHEA-COMP:19908"/>
        <dbReference type="ChEBI" id="CHEBI:13193"/>
        <dbReference type="ChEBI" id="CHEBI:15378"/>
        <dbReference type="ChEBI" id="CHEBI:17499"/>
        <dbReference type="ChEBI" id="CHEBI:29950"/>
        <dbReference type="ChEBI" id="CHEBI:61963"/>
        <dbReference type="ChEBI" id="CHEBI:90618"/>
        <dbReference type="ChEBI" id="CHEBI:232372"/>
        <dbReference type="ChEBI" id="CHEBI:456215"/>
    </reaction>
</comment>
<comment type="pathway">
    <text evidence="1">Cofactor biosynthesis; thiamine diphosphate biosynthesis.</text>
</comment>
<comment type="subcellular location">
    <subcellularLocation>
        <location evidence="1">Cytoplasm</location>
    </subcellularLocation>
</comment>
<comment type="similarity">
    <text evidence="1">Belongs to the ThiI family.</text>
</comment>
<organism>
    <name type="scientific">Histophilus somni (strain 2336)</name>
    <name type="common">Haemophilus somnus</name>
    <dbReference type="NCBI Taxonomy" id="228400"/>
    <lineage>
        <taxon>Bacteria</taxon>
        <taxon>Pseudomonadati</taxon>
        <taxon>Pseudomonadota</taxon>
        <taxon>Gammaproteobacteria</taxon>
        <taxon>Pasteurellales</taxon>
        <taxon>Pasteurellaceae</taxon>
        <taxon>Histophilus</taxon>
    </lineage>
</organism>
<proteinExistence type="inferred from homology"/>
<gene>
    <name evidence="1" type="primary">thiI</name>
    <name type="ordered locus">HSM_1380</name>
</gene>
<dbReference type="EC" id="2.8.1.4" evidence="1"/>
<dbReference type="EMBL" id="CP000947">
    <property type="protein sequence ID" value="ACA31119.1"/>
    <property type="molecule type" value="Genomic_DNA"/>
</dbReference>
<dbReference type="RefSeq" id="WP_012340531.1">
    <property type="nucleotide sequence ID" value="NC_010519.1"/>
</dbReference>
<dbReference type="SMR" id="B0UUA1"/>
<dbReference type="STRING" id="228400.HSM_1380"/>
<dbReference type="GeneID" id="31487678"/>
<dbReference type="KEGG" id="hsm:HSM_1380"/>
<dbReference type="HOGENOM" id="CLU_037952_4_1_6"/>
<dbReference type="UniPathway" id="UPA00060"/>
<dbReference type="GO" id="GO:0005829">
    <property type="term" value="C:cytosol"/>
    <property type="evidence" value="ECO:0007669"/>
    <property type="project" value="TreeGrafter"/>
</dbReference>
<dbReference type="GO" id="GO:0005524">
    <property type="term" value="F:ATP binding"/>
    <property type="evidence" value="ECO:0007669"/>
    <property type="project" value="UniProtKB-UniRule"/>
</dbReference>
<dbReference type="GO" id="GO:0004810">
    <property type="term" value="F:CCA tRNA nucleotidyltransferase activity"/>
    <property type="evidence" value="ECO:0007669"/>
    <property type="project" value="InterPro"/>
</dbReference>
<dbReference type="GO" id="GO:0000049">
    <property type="term" value="F:tRNA binding"/>
    <property type="evidence" value="ECO:0007669"/>
    <property type="project" value="UniProtKB-UniRule"/>
</dbReference>
<dbReference type="GO" id="GO:0140741">
    <property type="term" value="F:tRNA-uracil-4 sulfurtransferase activity"/>
    <property type="evidence" value="ECO:0007669"/>
    <property type="project" value="UniProtKB-EC"/>
</dbReference>
<dbReference type="GO" id="GO:0009228">
    <property type="term" value="P:thiamine biosynthetic process"/>
    <property type="evidence" value="ECO:0007669"/>
    <property type="project" value="UniProtKB-KW"/>
</dbReference>
<dbReference type="GO" id="GO:0009229">
    <property type="term" value="P:thiamine diphosphate biosynthetic process"/>
    <property type="evidence" value="ECO:0007669"/>
    <property type="project" value="UniProtKB-UniRule"/>
</dbReference>
<dbReference type="GO" id="GO:0052837">
    <property type="term" value="P:thiazole biosynthetic process"/>
    <property type="evidence" value="ECO:0007669"/>
    <property type="project" value="InterPro"/>
</dbReference>
<dbReference type="GO" id="GO:0002937">
    <property type="term" value="P:tRNA 4-thiouridine biosynthesis"/>
    <property type="evidence" value="ECO:0007669"/>
    <property type="project" value="TreeGrafter"/>
</dbReference>
<dbReference type="CDD" id="cd01712">
    <property type="entry name" value="PPase_ThiI"/>
    <property type="match status" value="1"/>
</dbReference>
<dbReference type="CDD" id="cd00158">
    <property type="entry name" value="RHOD"/>
    <property type="match status" value="1"/>
</dbReference>
<dbReference type="CDD" id="cd11716">
    <property type="entry name" value="THUMP_ThiI"/>
    <property type="match status" value="1"/>
</dbReference>
<dbReference type="FunFam" id="3.30.2130.30:FF:000002">
    <property type="entry name" value="tRNA sulfurtransferase"/>
    <property type="match status" value="1"/>
</dbReference>
<dbReference type="FunFam" id="3.40.50.620:FF:000029">
    <property type="entry name" value="tRNA sulfurtransferase"/>
    <property type="match status" value="1"/>
</dbReference>
<dbReference type="Gene3D" id="3.30.2130.30">
    <property type="match status" value="1"/>
</dbReference>
<dbReference type="Gene3D" id="3.40.50.620">
    <property type="entry name" value="HUPs"/>
    <property type="match status" value="1"/>
</dbReference>
<dbReference type="Gene3D" id="3.40.250.10">
    <property type="entry name" value="Rhodanese-like domain"/>
    <property type="match status" value="1"/>
</dbReference>
<dbReference type="HAMAP" id="MF_00021">
    <property type="entry name" value="ThiI"/>
    <property type="match status" value="1"/>
</dbReference>
<dbReference type="InterPro" id="IPR001763">
    <property type="entry name" value="Rhodanese-like_dom"/>
</dbReference>
<dbReference type="InterPro" id="IPR036873">
    <property type="entry name" value="Rhodanese-like_dom_sf"/>
</dbReference>
<dbReference type="InterPro" id="IPR014729">
    <property type="entry name" value="Rossmann-like_a/b/a_fold"/>
</dbReference>
<dbReference type="InterPro" id="IPR020536">
    <property type="entry name" value="ThiI_AANH"/>
</dbReference>
<dbReference type="InterPro" id="IPR054173">
    <property type="entry name" value="ThiI_fer"/>
</dbReference>
<dbReference type="InterPro" id="IPR049961">
    <property type="entry name" value="ThiI_N"/>
</dbReference>
<dbReference type="InterPro" id="IPR026340">
    <property type="entry name" value="THII_Thiazole_biosynth_dom"/>
</dbReference>
<dbReference type="InterPro" id="IPR004114">
    <property type="entry name" value="THUMP_dom"/>
</dbReference>
<dbReference type="InterPro" id="IPR049962">
    <property type="entry name" value="THUMP_ThiI"/>
</dbReference>
<dbReference type="InterPro" id="IPR003720">
    <property type="entry name" value="tRNA_STrfase"/>
</dbReference>
<dbReference type="InterPro" id="IPR050102">
    <property type="entry name" value="tRNA_sulfurtransferase_ThiI"/>
</dbReference>
<dbReference type="NCBIfam" id="TIGR04271">
    <property type="entry name" value="ThiI_C_thiazole"/>
    <property type="match status" value="1"/>
</dbReference>
<dbReference type="NCBIfam" id="TIGR00342">
    <property type="entry name" value="tRNA uracil 4-sulfurtransferase ThiI"/>
    <property type="match status" value="1"/>
</dbReference>
<dbReference type="PANTHER" id="PTHR43209">
    <property type="entry name" value="TRNA SULFURTRANSFERASE"/>
    <property type="match status" value="1"/>
</dbReference>
<dbReference type="PANTHER" id="PTHR43209:SF1">
    <property type="entry name" value="TRNA SULFURTRANSFERASE"/>
    <property type="match status" value="1"/>
</dbReference>
<dbReference type="Pfam" id="PF00581">
    <property type="entry name" value="Rhodanese"/>
    <property type="match status" value="1"/>
</dbReference>
<dbReference type="Pfam" id="PF02568">
    <property type="entry name" value="ThiI"/>
    <property type="match status" value="1"/>
</dbReference>
<dbReference type="Pfam" id="PF22025">
    <property type="entry name" value="ThiI_fer"/>
    <property type="match status" value="1"/>
</dbReference>
<dbReference type="Pfam" id="PF02926">
    <property type="entry name" value="THUMP"/>
    <property type="match status" value="1"/>
</dbReference>
<dbReference type="SMART" id="SM00981">
    <property type="entry name" value="THUMP"/>
    <property type="match status" value="1"/>
</dbReference>
<dbReference type="SUPFAM" id="SSF52402">
    <property type="entry name" value="Adenine nucleotide alpha hydrolases-like"/>
    <property type="match status" value="1"/>
</dbReference>
<dbReference type="SUPFAM" id="SSF52821">
    <property type="entry name" value="Rhodanese/Cell cycle control phosphatase"/>
    <property type="match status" value="1"/>
</dbReference>
<dbReference type="SUPFAM" id="SSF143437">
    <property type="entry name" value="THUMP domain-like"/>
    <property type="match status" value="1"/>
</dbReference>
<dbReference type="PROSITE" id="PS50206">
    <property type="entry name" value="RHODANESE_3"/>
    <property type="match status" value="1"/>
</dbReference>
<dbReference type="PROSITE" id="PS51165">
    <property type="entry name" value="THUMP"/>
    <property type="match status" value="1"/>
</dbReference>
<sequence length="484" mass="54698">MKFIIKLFPEIMIKSESVRKRFVKILTGNIRNVLNKYDDTVAVVKHWDYIEVRSKNIENRTLLVELLGRIPGIHHFLEVEEKPFVTLHDIFEQTLSDVATQIENKTFCVRVKRKGKHDFSSLDAERYIGGGLNQAVASAKVQLSKPDVTVRIDIENDKMMLIKARHQGIGGYPIGTQEDVLSLISGGFDSGVSSYMLIRRGSRVHYCFFNLGGATHEIGVKQMAYHIWKRFSGSHKVRFVAINFEQVVAEILEKVDNGQMGVVLKRMMVRAASKVAQRFGIQAIVTGEALGQVSSQTLTNLRLIDEVAESLVLRPLITHDKEQIIAKAKEIGTEDIAKSMPEFCGAISKSPTVKAVKEKIEQEESYFDFSVLESAVQNAQYLDIRQIAEQTKKEVSEVDEITVLSANEVILDIRSPEEVDDKPLEISGQNIILMPFYKLSSHFAELDQSKNYVLYCERGVMSKLQALYLREKGFDNVKVLNKIS</sequence>
<reference key="1">
    <citation type="submission" date="2008-02" db="EMBL/GenBank/DDBJ databases">
        <title>Complete sequence of Haemophilus somnus 2336.</title>
        <authorList>
            <consortium name="US DOE Joint Genome Institute"/>
            <person name="Siddaramappa S."/>
            <person name="Duncan A.J."/>
            <person name="Challacombe J.F."/>
            <person name="Rainey D."/>
            <person name="Gillaspy A.F."/>
            <person name="Carson M."/>
            <person name="Gipson J."/>
            <person name="Gipson M."/>
            <person name="Bruce D."/>
            <person name="Detter J.C."/>
            <person name="Han C.S."/>
            <person name="Land M."/>
            <person name="Tapia R."/>
            <person name="Thompson L.S."/>
            <person name="Orvis J."/>
            <person name="Zaitshik J."/>
            <person name="Barnes G."/>
            <person name="Brettin T.S."/>
            <person name="Dyer D.W."/>
            <person name="Inzana T.J."/>
        </authorList>
    </citation>
    <scope>NUCLEOTIDE SEQUENCE [LARGE SCALE GENOMIC DNA]</scope>
    <source>
        <strain>2336</strain>
    </source>
</reference>
<accession>B0UUA1</accession>
<protein>
    <recommendedName>
        <fullName evidence="1">tRNA sulfurtransferase</fullName>
        <ecNumber evidence="1">2.8.1.4</ecNumber>
    </recommendedName>
    <alternativeName>
        <fullName evidence="1">Sulfur carrier protein ThiS sulfurtransferase</fullName>
    </alternativeName>
    <alternativeName>
        <fullName evidence="1">Thiamine biosynthesis protein ThiI</fullName>
    </alternativeName>
    <alternativeName>
        <fullName evidence="1">tRNA 4-thiouridine synthase</fullName>
    </alternativeName>
</protein>
<evidence type="ECO:0000255" key="1">
    <source>
        <dbReference type="HAMAP-Rule" id="MF_00021"/>
    </source>
</evidence>
<name>THII_HISS2</name>